<accession>Q3T1I9</accession>
<dbReference type="EMBL" id="BC101894">
    <property type="status" value="NOT_ANNOTATED_CDS"/>
    <property type="molecule type" value="mRNA"/>
</dbReference>
<dbReference type="RefSeq" id="NP_001029171.1">
    <property type="nucleotide sequence ID" value="NM_001033999.3"/>
</dbReference>
<dbReference type="RefSeq" id="NP_001420309.1">
    <property type="nucleotide sequence ID" value="NM_001433380.1"/>
</dbReference>
<dbReference type="RefSeq" id="XP_006234833.1">
    <property type="nucleotide sequence ID" value="XM_006234771.3"/>
</dbReference>
<dbReference type="RefSeq" id="XP_006234834.1">
    <property type="nucleotide sequence ID" value="XM_006234772.5"/>
</dbReference>
<dbReference type="RefSeq" id="XP_006234835.1">
    <property type="nucleotide sequence ID" value="XM_006234773.5"/>
</dbReference>
<dbReference type="RefSeq" id="XP_017447220.1">
    <property type="nucleotide sequence ID" value="XM_017591731.1"/>
</dbReference>
<dbReference type="RefSeq" id="XP_017447221.1">
    <property type="nucleotide sequence ID" value="XM_017591732.1"/>
</dbReference>
<dbReference type="SMR" id="Q3T1I9"/>
<dbReference type="FunCoup" id="Q3T1I9">
    <property type="interactions" value="3491"/>
</dbReference>
<dbReference type="STRING" id="10116.ENSRNOP00000007299"/>
<dbReference type="iPTMnet" id="Q3T1I9"/>
<dbReference type="PhosphoSitePlus" id="Q3T1I9"/>
<dbReference type="jPOST" id="Q3T1I9"/>
<dbReference type="PaxDb" id="10116-ENSRNOP00000007299"/>
<dbReference type="Ensembl" id="ENSRNOT00000007299.7">
    <property type="protein sequence ID" value="ENSRNOP00000007299.3"/>
    <property type="gene ID" value="ENSRNOG00000005483.7"/>
</dbReference>
<dbReference type="GeneID" id="311338"/>
<dbReference type="KEGG" id="rno:311338"/>
<dbReference type="UCSC" id="RGD:1590891">
    <property type="organism name" value="rat"/>
</dbReference>
<dbReference type="AGR" id="RGD:1590891"/>
<dbReference type="CTD" id="26015"/>
<dbReference type="RGD" id="1590891">
    <property type="gene designation" value="Rpap1"/>
</dbReference>
<dbReference type="eggNOG" id="KOG1894">
    <property type="taxonomic scope" value="Eukaryota"/>
</dbReference>
<dbReference type="eggNOG" id="KOG4732">
    <property type="taxonomic scope" value="Eukaryota"/>
</dbReference>
<dbReference type="GeneTree" id="ENSGT00390000007594"/>
<dbReference type="HOGENOM" id="CLU_005296_1_0_1"/>
<dbReference type="InParanoid" id="Q3T1I9"/>
<dbReference type="OMA" id="KYFLQCV"/>
<dbReference type="OrthoDB" id="348201at2759"/>
<dbReference type="PhylomeDB" id="Q3T1I9"/>
<dbReference type="TreeFam" id="TF324391"/>
<dbReference type="PRO" id="PR:Q3T1I9"/>
<dbReference type="Proteomes" id="UP000002494">
    <property type="component" value="Chromosome 3"/>
</dbReference>
<dbReference type="Bgee" id="ENSRNOG00000005483">
    <property type="expression patterns" value="Expressed in skeletal muscle tissue and 18 other cell types or tissues"/>
</dbReference>
<dbReference type="GO" id="GO:0000428">
    <property type="term" value="C:DNA-directed RNA polymerase complex"/>
    <property type="evidence" value="ECO:0007669"/>
    <property type="project" value="UniProtKB-KW"/>
</dbReference>
<dbReference type="GO" id="GO:0005634">
    <property type="term" value="C:nucleus"/>
    <property type="evidence" value="ECO:0007669"/>
    <property type="project" value="UniProtKB-SubCell"/>
</dbReference>
<dbReference type="GO" id="GO:0003677">
    <property type="term" value="F:DNA binding"/>
    <property type="evidence" value="ECO:0007669"/>
    <property type="project" value="UniProtKB-KW"/>
</dbReference>
<dbReference type="GO" id="GO:0016779">
    <property type="term" value="F:nucleotidyltransferase activity"/>
    <property type="evidence" value="ECO:0007669"/>
    <property type="project" value="UniProtKB-KW"/>
</dbReference>
<dbReference type="GO" id="GO:0006366">
    <property type="term" value="P:transcription by RNA polymerase II"/>
    <property type="evidence" value="ECO:0007669"/>
    <property type="project" value="InterPro"/>
</dbReference>
<dbReference type="InterPro" id="IPR016024">
    <property type="entry name" value="ARM-type_fold"/>
</dbReference>
<dbReference type="InterPro" id="IPR013929">
    <property type="entry name" value="RNA_pol_II_AP1_C"/>
</dbReference>
<dbReference type="InterPro" id="IPR013930">
    <property type="entry name" value="RNA_pol_II_AP1_N"/>
</dbReference>
<dbReference type="InterPro" id="IPR039913">
    <property type="entry name" value="RPAP1/Rba50"/>
</dbReference>
<dbReference type="PANTHER" id="PTHR21483">
    <property type="entry name" value="RNA POLYMERASE II-ASSOCIATED PROTEIN 1"/>
    <property type="match status" value="1"/>
</dbReference>
<dbReference type="PANTHER" id="PTHR21483:SF18">
    <property type="entry name" value="RNA POLYMERASE II-ASSOCIATED PROTEIN 1"/>
    <property type="match status" value="1"/>
</dbReference>
<dbReference type="Pfam" id="PF08620">
    <property type="entry name" value="RPAP1_C"/>
    <property type="match status" value="1"/>
</dbReference>
<dbReference type="Pfam" id="PF08621">
    <property type="entry name" value="RPAP1_N"/>
    <property type="match status" value="1"/>
</dbReference>
<dbReference type="SUPFAM" id="SSF48371">
    <property type="entry name" value="ARM repeat"/>
    <property type="match status" value="1"/>
</dbReference>
<name>RPAP1_RAT</name>
<comment type="function">
    <text evidence="1">Forms an interface between the RNA polymerase II enzyme and chaperone/scaffolding protein, suggesting that it is required to connect RNA polymerase II to regulators of protein complex formation. Required for interaction of the RNA polymerase II complex with acetylated histone H3 (By similarity).</text>
</comment>
<comment type="subunit">
    <text evidence="1">Part of an RNA polymerase II complex that contains POLR2A, POLR2B, POLR2C, POLR2D, POLR2E, POLR2F, POLR2G, POLR2H, POLR2I, POLR2J, POLR2K, POLR2L, RPAP1, FCP1 plus the general transcription factors TFIIB and TFIIF.</text>
</comment>
<comment type="subcellular location">
    <subcellularLocation>
        <location evidence="1">Nucleus</location>
    </subcellularLocation>
</comment>
<comment type="similarity">
    <text evidence="4">Belongs to the RPAP1 family.</text>
</comment>
<sequence>MMLSRPKPGESEVDLLRFQSQFLEAGAAPAVQLVKGSRRRGDAHPDQLPPQDHRDVVMLDSLPDLPPALLPAPSKRARPSPGRPLPHDEDPEERLNRHDEHITAVLSKIVERDTSSVTVTLPVPSGVAFPPVFHRSQERQVKPAASSKRSIFAQEIAARRVSDNRAPSAEQVVPSPDAPEGAVPCETPSSKDRGSQLPGRSHSFHRPNLITGKGLRSQAAVQEVQTIHEENVARLQAMDPEEILKEQQQLLAQLDPSLVAFLRAHNHTREQTETKATKEQNPERPSVPVSKEEPIMSTCTGESGTRDKLEDKLEDKLQPRTPALKLPMTPNKEWLHMDTVELEKLHWTQDLPPLRRQQTQERMQARFSLQGELLEPDVDLPTHLGLHHHGEEAERAGYSLQELFHLTRSQVSQQRALALHVLSHIVGRAQAGEFGDRLVGSVLRLLLDAGFLFLLRFSLDDRIDSVIAAAVRALRALLVAPGDEELLDSTFSWYHGASVFPMMPSHDDKEDEDEDEELTKEKVNRKTPEEGSRPPPDLARHDVIKGLLATNLLPRFRYVLEVTCPGPSVVLDILAVLIRLARHSLESAMRVLECPRLMETIVREFLPTSWSPIGVGPAPSLYKVPCAAAMKLLRVLASAGRNIAARLLSSFDVRSRLCRFIAEAPRDLALPFEEAEILTTEAFRLWAVAASYGQGGDLYRELYPVLMRALQTLPPELSTHPLQPLSMQRMASLLTLLTQLTLAASTQPEATSGSVESCVVAIPSSITWTHVSGLKPLVEPCLKQTLKFLRRPDVWNALGPVPSACLLFLGAYYQTWSQQSGLCPEDWLQDMERFLDEFLLPLLSQPPLGRMWDSLRDCSPLCNPLSCASTPEALPSLVSLGCAGGCPPLSVAGSASPFPFLTALLSLINTLGQIHKGLCRQLAVVLTAPGLQNYFLQCVAPAPAPQLTPFSAWALRHEYHLQYLVLSLAQKAATSQPEPAASTALHHVMALVLLSRLLPGSEFLAHELLLSCVFRLGFLPENASGGPEAADFSDGLSLGNSGDPHCRRGALLVQACQDLPSIRSCYLAHCSPARASLLTSQALYRGELPRVSSLLLPVPKEPLLPTDWPFQPLIHLYHRASDTPSGLPAADTVGITMRVLQWVLVLESWRPEALWAVPPAARLARLMCVYLVDSELFRETPIQRLVAALLARLCQPQVLPNLKLDCPLPGLTSFPDLYASFLDHFEAVSFGDHLFGALVLLPLQRRFSVTLRLALFGEHVGVLRALGLPLAQLPVPLECYTEPAEDSLALLQLYFRALVTGALHARWCPVLYTVAVAHVNSFVFCQDPKSSDEVKAARRSMLQKVWLLADKDLRQHLLHYKLPNSSLPEGFELYPQLPRLRQQYLQTLPTEVLQNGGFKT</sequence>
<protein>
    <recommendedName>
        <fullName>RNA polymerase II-associated protein 1</fullName>
    </recommendedName>
</protein>
<keyword id="KW-0238">DNA-binding</keyword>
<keyword id="KW-0240">DNA-directed RNA polymerase</keyword>
<keyword id="KW-0548">Nucleotidyltransferase</keyword>
<keyword id="KW-0539">Nucleus</keyword>
<keyword id="KW-0597">Phosphoprotein</keyword>
<keyword id="KW-1185">Reference proteome</keyword>
<keyword id="KW-0804">Transcription</keyword>
<keyword id="KW-0808">Transferase</keyword>
<gene>
    <name type="primary">Rpap1</name>
</gene>
<organism>
    <name type="scientific">Rattus norvegicus</name>
    <name type="common">Rat</name>
    <dbReference type="NCBI Taxonomy" id="10116"/>
    <lineage>
        <taxon>Eukaryota</taxon>
        <taxon>Metazoa</taxon>
        <taxon>Chordata</taxon>
        <taxon>Craniata</taxon>
        <taxon>Vertebrata</taxon>
        <taxon>Euteleostomi</taxon>
        <taxon>Mammalia</taxon>
        <taxon>Eutheria</taxon>
        <taxon>Euarchontoglires</taxon>
        <taxon>Glires</taxon>
        <taxon>Rodentia</taxon>
        <taxon>Myomorpha</taxon>
        <taxon>Muroidea</taxon>
        <taxon>Muridae</taxon>
        <taxon>Murinae</taxon>
        <taxon>Rattus</taxon>
    </lineage>
</organism>
<feature type="chain" id="PRO_0000284843" description="RNA polymerase II-associated protein 1">
    <location>
        <begin position="1"/>
        <end position="1400"/>
    </location>
</feature>
<feature type="region of interest" description="Disordered" evidence="3">
    <location>
        <begin position="35"/>
        <end position="54"/>
    </location>
</feature>
<feature type="region of interest" description="Disordered" evidence="3">
    <location>
        <begin position="60"/>
        <end position="95"/>
    </location>
</feature>
<feature type="region of interest" description="Disordered" evidence="3">
    <location>
        <begin position="161"/>
        <end position="215"/>
    </location>
</feature>
<feature type="region of interest" description="Disordered" evidence="3">
    <location>
        <begin position="269"/>
        <end position="310"/>
    </location>
</feature>
<feature type="region of interest" description="Disordered" evidence="3">
    <location>
        <begin position="504"/>
        <end position="539"/>
    </location>
</feature>
<feature type="compositionally biased region" description="Basic and acidic residues" evidence="3">
    <location>
        <begin position="39"/>
        <end position="54"/>
    </location>
</feature>
<feature type="compositionally biased region" description="Basic and acidic residues" evidence="3">
    <location>
        <begin position="85"/>
        <end position="95"/>
    </location>
</feature>
<feature type="compositionally biased region" description="Basic and acidic residues" evidence="3">
    <location>
        <begin position="269"/>
        <end position="282"/>
    </location>
</feature>
<feature type="compositionally biased region" description="Acidic residues" evidence="3">
    <location>
        <begin position="509"/>
        <end position="518"/>
    </location>
</feature>
<feature type="compositionally biased region" description="Basic and acidic residues" evidence="3">
    <location>
        <begin position="519"/>
        <end position="539"/>
    </location>
</feature>
<feature type="modified residue" description="Phosphothreonine" evidence="2">
    <location>
        <position position="329"/>
    </location>
</feature>
<proteinExistence type="evidence at protein level"/>
<evidence type="ECO:0000250" key="1"/>
<evidence type="ECO:0000250" key="2">
    <source>
        <dbReference type="UniProtKB" id="Q9BWH6"/>
    </source>
</evidence>
<evidence type="ECO:0000256" key="3">
    <source>
        <dbReference type="SAM" id="MobiDB-lite"/>
    </source>
</evidence>
<evidence type="ECO:0000305" key="4"/>
<reference key="1">
    <citation type="journal article" date="2004" name="Genome Res.">
        <title>The status, quality, and expansion of the NIH full-length cDNA project: the Mammalian Gene Collection (MGC).</title>
        <authorList>
            <consortium name="The MGC Project Team"/>
        </authorList>
    </citation>
    <scope>NUCLEOTIDE SEQUENCE [LARGE SCALE MRNA]</scope>
    <source>
        <tissue>Prostate</tissue>
    </source>
</reference>
<reference key="2">
    <citation type="journal article" date="2012" name="Nat. Commun.">
        <title>Quantitative maps of protein phosphorylation sites across 14 different rat organs and tissues.</title>
        <authorList>
            <person name="Lundby A."/>
            <person name="Secher A."/>
            <person name="Lage K."/>
            <person name="Nordsborg N.B."/>
            <person name="Dmytriyev A."/>
            <person name="Lundby C."/>
            <person name="Olsen J.V."/>
        </authorList>
    </citation>
    <scope>IDENTIFICATION BY MASS SPECTROMETRY [LARGE SCALE ANALYSIS]</scope>
</reference>